<comment type="function">
    <text evidence="1">Involved in the gluconeogenesis. Catalyzes the conversion of oxaloacetate (OAA) to phosphoenolpyruvate (PEP) through direct phosphoryl transfer between the nucleoside triphosphate and OAA.</text>
</comment>
<comment type="catalytic activity">
    <reaction evidence="1">
        <text>oxaloacetate + ATP = phosphoenolpyruvate + ADP + CO2</text>
        <dbReference type="Rhea" id="RHEA:18617"/>
        <dbReference type="ChEBI" id="CHEBI:16452"/>
        <dbReference type="ChEBI" id="CHEBI:16526"/>
        <dbReference type="ChEBI" id="CHEBI:30616"/>
        <dbReference type="ChEBI" id="CHEBI:58702"/>
        <dbReference type="ChEBI" id="CHEBI:456216"/>
        <dbReference type="EC" id="4.1.1.49"/>
    </reaction>
</comment>
<comment type="cofactor">
    <cofactor evidence="1">
        <name>Mn(2+)</name>
        <dbReference type="ChEBI" id="CHEBI:29035"/>
    </cofactor>
    <text evidence="1">Binds 1 Mn(2+) ion per subunit.</text>
</comment>
<comment type="pathway">
    <text evidence="1">Carbohydrate biosynthesis; gluconeogenesis.</text>
</comment>
<comment type="subcellular location">
    <subcellularLocation>
        <location evidence="1">Cytoplasm</location>
    </subcellularLocation>
</comment>
<comment type="similarity">
    <text evidence="1">Belongs to the phosphoenolpyruvate carboxykinase (ATP) family.</text>
</comment>
<sequence length="532" mass="58194">MNFGRVNPAQTLDAQGITGLGEVHYNLIEPALVEAAVKRGEGRLGRGGAFLCSTGAFTGRSPKDKFVVRTPSVEDTIWWENNAPMDPEAFDRLHADMLEHMKGRTYFVQDLFAGADPELRLDVRMVTELAWHGLFIRHMLRRPERTELDSFVPEWTVINCPSFKADPARHGCRTDTVITLNFDKKLILIANTEYAGENKKSVFTLLNYILPGKGVMAMHCSANHAIGNTDDAAVFFGLSGTGKTTLSADPSRTLIGDDEHGWSDKGTFNFEGGCYAKTINLSPEAEPEIYATTSKFATVVENMVYNEETLELDFDDDSLTANTRCAYPLEYISNASATGMGGHPKNVIMLTCDAFGVLPPIARLTPAQAMYHFLSGFTSKVAGTERGVTEPQPTFSTCFGAPFMPRRPEVYGKLLQEKITSLGATCWLVNTGWTGGAYGTGKRMPIKATRALLTAALDGSLANVTFRKDPNFGFEVPTELHGVDSSLLDPRSTWADPAAYDAQAKKLVEMFANNFAQYVPYIDADVKAAAIG</sequence>
<dbReference type="EC" id="4.1.1.49" evidence="1"/>
<dbReference type="EMBL" id="CP000661">
    <property type="protein sequence ID" value="ABP71454.1"/>
    <property type="molecule type" value="Genomic_DNA"/>
</dbReference>
<dbReference type="SMR" id="A4WVP0"/>
<dbReference type="STRING" id="349102.Rsph17025_2566"/>
<dbReference type="KEGG" id="rsq:Rsph17025_2566"/>
<dbReference type="eggNOG" id="COG1866">
    <property type="taxonomic scope" value="Bacteria"/>
</dbReference>
<dbReference type="HOGENOM" id="CLU_018247_0_1_5"/>
<dbReference type="BioCyc" id="RSPH349102:G1G8M-2645-MONOMER"/>
<dbReference type="UniPathway" id="UPA00138"/>
<dbReference type="GO" id="GO:0005829">
    <property type="term" value="C:cytosol"/>
    <property type="evidence" value="ECO:0007669"/>
    <property type="project" value="TreeGrafter"/>
</dbReference>
<dbReference type="GO" id="GO:0005524">
    <property type="term" value="F:ATP binding"/>
    <property type="evidence" value="ECO:0007669"/>
    <property type="project" value="UniProtKB-UniRule"/>
</dbReference>
<dbReference type="GO" id="GO:0046872">
    <property type="term" value="F:metal ion binding"/>
    <property type="evidence" value="ECO:0007669"/>
    <property type="project" value="UniProtKB-KW"/>
</dbReference>
<dbReference type="GO" id="GO:0004612">
    <property type="term" value="F:phosphoenolpyruvate carboxykinase (ATP) activity"/>
    <property type="evidence" value="ECO:0007669"/>
    <property type="project" value="UniProtKB-UniRule"/>
</dbReference>
<dbReference type="GO" id="GO:0006094">
    <property type="term" value="P:gluconeogenesis"/>
    <property type="evidence" value="ECO:0007669"/>
    <property type="project" value="UniProtKB-UniRule"/>
</dbReference>
<dbReference type="CDD" id="cd00484">
    <property type="entry name" value="PEPCK_ATP"/>
    <property type="match status" value="1"/>
</dbReference>
<dbReference type="Gene3D" id="3.90.228.20">
    <property type="match status" value="1"/>
</dbReference>
<dbReference type="Gene3D" id="3.40.449.10">
    <property type="entry name" value="Phosphoenolpyruvate Carboxykinase, domain 1"/>
    <property type="match status" value="1"/>
</dbReference>
<dbReference type="Gene3D" id="2.170.8.10">
    <property type="entry name" value="Phosphoenolpyruvate Carboxykinase, domain 2"/>
    <property type="match status" value="1"/>
</dbReference>
<dbReference type="HAMAP" id="MF_00453">
    <property type="entry name" value="PEPCK_ATP"/>
    <property type="match status" value="1"/>
</dbReference>
<dbReference type="InterPro" id="IPR001272">
    <property type="entry name" value="PEP_carboxykinase_ATP"/>
</dbReference>
<dbReference type="InterPro" id="IPR013035">
    <property type="entry name" value="PEP_carboxykinase_C"/>
</dbReference>
<dbReference type="InterPro" id="IPR008210">
    <property type="entry name" value="PEP_carboxykinase_N"/>
</dbReference>
<dbReference type="NCBIfam" id="TIGR00224">
    <property type="entry name" value="pckA"/>
    <property type="match status" value="1"/>
</dbReference>
<dbReference type="NCBIfam" id="NF006820">
    <property type="entry name" value="PRK09344.1-2"/>
    <property type="match status" value="1"/>
</dbReference>
<dbReference type="NCBIfam" id="NF006821">
    <property type="entry name" value="PRK09344.1-3"/>
    <property type="match status" value="1"/>
</dbReference>
<dbReference type="NCBIfam" id="NF006822">
    <property type="entry name" value="PRK09344.1-4"/>
    <property type="match status" value="1"/>
</dbReference>
<dbReference type="PANTHER" id="PTHR30031:SF0">
    <property type="entry name" value="PHOSPHOENOLPYRUVATE CARBOXYKINASE (ATP)"/>
    <property type="match status" value="1"/>
</dbReference>
<dbReference type="PANTHER" id="PTHR30031">
    <property type="entry name" value="PHOSPHOENOLPYRUVATE CARBOXYKINASE ATP"/>
    <property type="match status" value="1"/>
</dbReference>
<dbReference type="Pfam" id="PF01293">
    <property type="entry name" value="PEPCK_ATP"/>
    <property type="match status" value="1"/>
</dbReference>
<dbReference type="PIRSF" id="PIRSF006294">
    <property type="entry name" value="PEP_crbxkin"/>
    <property type="match status" value="1"/>
</dbReference>
<dbReference type="SUPFAM" id="SSF68923">
    <property type="entry name" value="PEP carboxykinase N-terminal domain"/>
    <property type="match status" value="1"/>
</dbReference>
<dbReference type="SUPFAM" id="SSF53795">
    <property type="entry name" value="PEP carboxykinase-like"/>
    <property type="match status" value="1"/>
</dbReference>
<accession>A4WVP0</accession>
<organism>
    <name type="scientific">Cereibacter sphaeroides (strain ATCC 17025 / ATH 2.4.3)</name>
    <name type="common">Rhodobacter sphaeroides</name>
    <dbReference type="NCBI Taxonomy" id="349102"/>
    <lineage>
        <taxon>Bacteria</taxon>
        <taxon>Pseudomonadati</taxon>
        <taxon>Pseudomonadota</taxon>
        <taxon>Alphaproteobacteria</taxon>
        <taxon>Rhodobacterales</taxon>
        <taxon>Paracoccaceae</taxon>
        <taxon>Cereibacter</taxon>
    </lineage>
</organism>
<feature type="chain" id="PRO_1000026347" description="Phosphoenolpyruvate carboxykinase (ATP)">
    <location>
        <begin position="1"/>
        <end position="532"/>
    </location>
</feature>
<feature type="binding site" evidence="1">
    <location>
        <position position="60"/>
    </location>
    <ligand>
        <name>substrate</name>
    </ligand>
</feature>
<feature type="binding site" evidence="1">
    <location>
        <position position="194"/>
    </location>
    <ligand>
        <name>substrate</name>
    </ligand>
</feature>
<feature type="binding site" evidence="1">
    <location>
        <position position="200"/>
    </location>
    <ligand>
        <name>ATP</name>
        <dbReference type="ChEBI" id="CHEBI:30616"/>
    </ligand>
</feature>
<feature type="binding site" evidence="1">
    <location>
        <position position="200"/>
    </location>
    <ligand>
        <name>Mn(2+)</name>
        <dbReference type="ChEBI" id="CHEBI:29035"/>
    </ligand>
</feature>
<feature type="binding site" evidence="1">
    <location>
        <position position="200"/>
    </location>
    <ligand>
        <name>substrate</name>
    </ligand>
</feature>
<feature type="binding site" evidence="1">
    <location>
        <position position="219"/>
    </location>
    <ligand>
        <name>ATP</name>
        <dbReference type="ChEBI" id="CHEBI:30616"/>
    </ligand>
</feature>
<feature type="binding site" evidence="1">
    <location>
        <position position="219"/>
    </location>
    <ligand>
        <name>Mn(2+)</name>
        <dbReference type="ChEBI" id="CHEBI:29035"/>
    </ligand>
</feature>
<feature type="binding site" evidence="1">
    <location>
        <begin position="237"/>
        <end position="245"/>
    </location>
    <ligand>
        <name>ATP</name>
        <dbReference type="ChEBI" id="CHEBI:30616"/>
    </ligand>
</feature>
<feature type="binding site" evidence="1">
    <location>
        <position position="258"/>
    </location>
    <ligand>
        <name>Mn(2+)</name>
        <dbReference type="ChEBI" id="CHEBI:29035"/>
    </ligand>
</feature>
<feature type="binding site" evidence="1">
    <location>
        <position position="286"/>
    </location>
    <ligand>
        <name>ATP</name>
        <dbReference type="ChEBI" id="CHEBI:30616"/>
    </ligand>
</feature>
<feature type="binding site" evidence="1">
    <location>
        <position position="324"/>
    </location>
    <ligand>
        <name>ATP</name>
        <dbReference type="ChEBI" id="CHEBI:30616"/>
    </ligand>
</feature>
<feature type="binding site" evidence="1">
    <location>
        <position position="324"/>
    </location>
    <ligand>
        <name>substrate</name>
    </ligand>
</feature>
<feature type="binding site" evidence="1">
    <location>
        <position position="449"/>
    </location>
    <ligand>
        <name>ATP</name>
        <dbReference type="ChEBI" id="CHEBI:30616"/>
    </ligand>
</feature>
<name>PCKA_CERS5</name>
<protein>
    <recommendedName>
        <fullName evidence="1">Phosphoenolpyruvate carboxykinase (ATP)</fullName>
        <shortName evidence="1">PCK</shortName>
        <shortName evidence="1">PEP carboxykinase</shortName>
        <shortName evidence="1">PEPCK</shortName>
        <ecNumber evidence="1">4.1.1.49</ecNumber>
    </recommendedName>
</protein>
<reference key="1">
    <citation type="submission" date="2007-04" db="EMBL/GenBank/DDBJ databases">
        <title>Complete sequence of chromosome of Rhodobacter sphaeroides ATCC 17025.</title>
        <authorList>
            <consortium name="US DOE Joint Genome Institute"/>
            <person name="Copeland A."/>
            <person name="Lucas S."/>
            <person name="Lapidus A."/>
            <person name="Barry K."/>
            <person name="Detter J.C."/>
            <person name="Glavina del Rio T."/>
            <person name="Hammon N."/>
            <person name="Israni S."/>
            <person name="Dalin E."/>
            <person name="Tice H."/>
            <person name="Pitluck S."/>
            <person name="Chertkov O."/>
            <person name="Brettin T."/>
            <person name="Bruce D."/>
            <person name="Han C."/>
            <person name="Schmutz J."/>
            <person name="Larimer F."/>
            <person name="Land M."/>
            <person name="Hauser L."/>
            <person name="Kyrpides N."/>
            <person name="Kim E."/>
            <person name="Richardson P."/>
            <person name="Mackenzie C."/>
            <person name="Choudhary M."/>
            <person name="Donohue T.J."/>
            <person name="Kaplan S."/>
        </authorList>
    </citation>
    <scope>NUCLEOTIDE SEQUENCE [LARGE SCALE GENOMIC DNA]</scope>
    <source>
        <strain>ATCC 17025 / ATH 2.4.3</strain>
    </source>
</reference>
<keyword id="KW-0067">ATP-binding</keyword>
<keyword id="KW-0963">Cytoplasm</keyword>
<keyword id="KW-0210">Decarboxylase</keyword>
<keyword id="KW-0312">Gluconeogenesis</keyword>
<keyword id="KW-0456">Lyase</keyword>
<keyword id="KW-0464">Manganese</keyword>
<keyword id="KW-0479">Metal-binding</keyword>
<keyword id="KW-0547">Nucleotide-binding</keyword>
<gene>
    <name evidence="1" type="primary">pckA</name>
    <name type="ordered locus">Rsph17025_2566</name>
</gene>
<proteinExistence type="inferred from homology"/>
<evidence type="ECO:0000255" key="1">
    <source>
        <dbReference type="HAMAP-Rule" id="MF_00453"/>
    </source>
</evidence>